<organism>
    <name type="scientific">Deinococcus radiodurans (strain ATCC 13939 / DSM 20539 / JCM 16871 / CCUG 27074 / LMG 4051 / NBRC 15346 / NCIMB 9279 / VKM B-1422 / R1)</name>
    <dbReference type="NCBI Taxonomy" id="243230"/>
    <lineage>
        <taxon>Bacteria</taxon>
        <taxon>Thermotogati</taxon>
        <taxon>Deinococcota</taxon>
        <taxon>Deinococci</taxon>
        <taxon>Deinococcales</taxon>
        <taxon>Deinococcaceae</taxon>
        <taxon>Deinococcus</taxon>
    </lineage>
</organism>
<protein>
    <recommendedName>
        <fullName evidence="1">Isoprenyl transferase</fullName>
        <ecNumber evidence="1">2.5.1.-</ecNumber>
    </recommendedName>
</protein>
<accession>Q9RRP1</accession>
<gene>
    <name evidence="1" type="primary">uppS</name>
    <name type="ordered locus">DR_2447</name>
</gene>
<reference key="1">
    <citation type="journal article" date="1999" name="Science">
        <title>Genome sequence of the radioresistant bacterium Deinococcus radiodurans R1.</title>
        <authorList>
            <person name="White O."/>
            <person name="Eisen J.A."/>
            <person name="Heidelberg J.F."/>
            <person name="Hickey E.K."/>
            <person name="Peterson J.D."/>
            <person name="Dodson R.J."/>
            <person name="Haft D.H."/>
            <person name="Gwinn M.L."/>
            <person name="Nelson W.C."/>
            <person name="Richardson D.L."/>
            <person name="Moffat K.S."/>
            <person name="Qin H."/>
            <person name="Jiang L."/>
            <person name="Pamphile W."/>
            <person name="Crosby M."/>
            <person name="Shen M."/>
            <person name="Vamathevan J.J."/>
            <person name="Lam P."/>
            <person name="McDonald L.A."/>
            <person name="Utterback T.R."/>
            <person name="Zalewski C."/>
            <person name="Makarova K.S."/>
            <person name="Aravind L."/>
            <person name="Daly M.J."/>
            <person name="Minton K.W."/>
            <person name="Fleischmann R.D."/>
            <person name="Ketchum K.A."/>
            <person name="Nelson K.E."/>
            <person name="Salzberg S.L."/>
            <person name="Smith H.O."/>
            <person name="Venter J.C."/>
            <person name="Fraser C.M."/>
        </authorList>
    </citation>
    <scope>NUCLEOTIDE SEQUENCE [LARGE SCALE GENOMIC DNA]</scope>
    <source>
        <strain>ATCC 13939 / DSM 20539 / JCM 16871 / CCUG 27074 / LMG 4051 / NBRC 15346 / NCIMB 9279 / VKM B-1422 / R1</strain>
    </source>
</reference>
<name>ISPT_DEIRA</name>
<proteinExistence type="inferred from homology"/>
<sequence length="274" mass="30699">MASLNSALRTAQHVRTATRGALLWGYEQKLAREVKANGKLPRHLGLILDGNRRFARAAGLQREMGHSFGADKAHEVLQWCLELGIPSATIWVLSTDNGSREPAELAHILSLLEREARQLAVDPRIHANRVRVRAIGQHDNFPPQVLAALNNLEESTAGYEGMRLNIAVGYGGREEIVDAVQSYLRTQAAQGATLEQAAENLTPDAIGAHLYAADQPDPDFIIRTSGEIRLSGFMLWQSVYSEYYFCDVYWPGFRRVDFLRALRDFQGRDRRFGK</sequence>
<comment type="function">
    <text evidence="1">Catalyzes the condensation of isopentenyl diphosphate (IPP) with allylic pyrophosphates generating different type of terpenoids.</text>
</comment>
<comment type="cofactor">
    <cofactor evidence="1">
        <name>Mg(2+)</name>
        <dbReference type="ChEBI" id="CHEBI:18420"/>
    </cofactor>
    <text evidence="1">Binds 2 magnesium ions per subunit.</text>
</comment>
<comment type="subunit">
    <text evidence="1">Homodimer.</text>
</comment>
<comment type="similarity">
    <text evidence="1">Belongs to the UPP synthase family.</text>
</comment>
<comment type="sequence caution" evidence="2">
    <conflict type="erroneous initiation">
        <sequence resource="EMBL-CDS" id="AAF11988"/>
    </conflict>
    <text>Extended N-terminus.</text>
</comment>
<evidence type="ECO:0000255" key="1">
    <source>
        <dbReference type="HAMAP-Rule" id="MF_01139"/>
    </source>
</evidence>
<evidence type="ECO:0000305" key="2"/>
<dbReference type="EC" id="2.5.1.-" evidence="1"/>
<dbReference type="EMBL" id="AE000513">
    <property type="protein sequence ID" value="AAF11988.1"/>
    <property type="status" value="ALT_INIT"/>
    <property type="molecule type" value="Genomic_DNA"/>
</dbReference>
<dbReference type="PIR" id="C75273">
    <property type="entry name" value="C75273"/>
</dbReference>
<dbReference type="RefSeq" id="NP_296167.1">
    <property type="nucleotide sequence ID" value="NC_001263.1"/>
</dbReference>
<dbReference type="RefSeq" id="WP_027480324.1">
    <property type="nucleotide sequence ID" value="NC_001263.1"/>
</dbReference>
<dbReference type="SMR" id="Q9RRP1"/>
<dbReference type="FunCoup" id="Q9RRP1">
    <property type="interactions" value="398"/>
</dbReference>
<dbReference type="STRING" id="243230.DR_2447"/>
<dbReference type="PaxDb" id="243230-DR_2447"/>
<dbReference type="EnsemblBacteria" id="AAF11988">
    <property type="protein sequence ID" value="AAF11988"/>
    <property type="gene ID" value="DR_2447"/>
</dbReference>
<dbReference type="GeneID" id="69518700"/>
<dbReference type="KEGG" id="dra:DR_2447"/>
<dbReference type="PATRIC" id="fig|243230.17.peg.2683"/>
<dbReference type="eggNOG" id="COG0020">
    <property type="taxonomic scope" value="Bacteria"/>
</dbReference>
<dbReference type="HOGENOM" id="CLU_038505_2_0_0"/>
<dbReference type="InParanoid" id="Q9RRP1"/>
<dbReference type="OrthoDB" id="4191603at2"/>
<dbReference type="Proteomes" id="UP000002524">
    <property type="component" value="Chromosome 1"/>
</dbReference>
<dbReference type="GO" id="GO:0000287">
    <property type="term" value="F:magnesium ion binding"/>
    <property type="evidence" value="ECO:0007669"/>
    <property type="project" value="UniProtKB-UniRule"/>
</dbReference>
<dbReference type="GO" id="GO:0004659">
    <property type="term" value="F:prenyltransferase activity"/>
    <property type="evidence" value="ECO:0007669"/>
    <property type="project" value="UniProtKB-UniRule"/>
</dbReference>
<dbReference type="GO" id="GO:0016094">
    <property type="term" value="P:polyprenol biosynthetic process"/>
    <property type="evidence" value="ECO:0000318"/>
    <property type="project" value="GO_Central"/>
</dbReference>
<dbReference type="CDD" id="cd00475">
    <property type="entry name" value="Cis_IPPS"/>
    <property type="match status" value="1"/>
</dbReference>
<dbReference type="FunFam" id="3.40.1180.10:FF:000003">
    <property type="entry name" value="Isoprenyl transferase 2"/>
    <property type="match status" value="1"/>
</dbReference>
<dbReference type="Gene3D" id="3.40.1180.10">
    <property type="entry name" value="Decaprenyl diphosphate synthase-like"/>
    <property type="match status" value="1"/>
</dbReference>
<dbReference type="HAMAP" id="MF_01139">
    <property type="entry name" value="ISPT"/>
    <property type="match status" value="1"/>
</dbReference>
<dbReference type="InterPro" id="IPR001441">
    <property type="entry name" value="UPP_synth-like"/>
</dbReference>
<dbReference type="InterPro" id="IPR018520">
    <property type="entry name" value="UPP_synth-like_CS"/>
</dbReference>
<dbReference type="InterPro" id="IPR036424">
    <property type="entry name" value="UPP_synth-like_sf"/>
</dbReference>
<dbReference type="NCBIfam" id="NF011409">
    <property type="entry name" value="PRK14835.1"/>
    <property type="match status" value="1"/>
</dbReference>
<dbReference type="NCBIfam" id="TIGR00055">
    <property type="entry name" value="uppS"/>
    <property type="match status" value="1"/>
</dbReference>
<dbReference type="PANTHER" id="PTHR10291:SF43">
    <property type="entry name" value="DEHYDRODOLICHYL DIPHOSPHATE SYNTHASE COMPLEX SUBUNIT DHDDS"/>
    <property type="match status" value="1"/>
</dbReference>
<dbReference type="PANTHER" id="PTHR10291">
    <property type="entry name" value="DEHYDRODOLICHYL DIPHOSPHATE SYNTHASE FAMILY MEMBER"/>
    <property type="match status" value="1"/>
</dbReference>
<dbReference type="Pfam" id="PF01255">
    <property type="entry name" value="Prenyltransf"/>
    <property type="match status" value="1"/>
</dbReference>
<dbReference type="SUPFAM" id="SSF64005">
    <property type="entry name" value="Undecaprenyl diphosphate synthase"/>
    <property type="match status" value="1"/>
</dbReference>
<dbReference type="PROSITE" id="PS01066">
    <property type="entry name" value="UPP_SYNTHASE"/>
    <property type="match status" value="1"/>
</dbReference>
<keyword id="KW-0460">Magnesium</keyword>
<keyword id="KW-0479">Metal-binding</keyword>
<keyword id="KW-1185">Reference proteome</keyword>
<keyword id="KW-0808">Transferase</keyword>
<feature type="chain" id="PRO_0000123608" description="Isoprenyl transferase">
    <location>
        <begin position="1"/>
        <end position="274"/>
    </location>
</feature>
<feature type="active site" evidence="1">
    <location>
        <position position="49"/>
    </location>
</feature>
<feature type="active site" description="Proton acceptor" evidence="1">
    <location>
        <position position="97"/>
    </location>
</feature>
<feature type="binding site" evidence="1">
    <location>
        <position position="49"/>
    </location>
    <ligand>
        <name>Mg(2+)</name>
        <dbReference type="ChEBI" id="CHEBI:18420"/>
    </ligand>
</feature>
<feature type="binding site" evidence="1">
    <location>
        <begin position="50"/>
        <end position="53"/>
    </location>
    <ligand>
        <name>substrate</name>
    </ligand>
</feature>
<feature type="binding site" evidence="1">
    <location>
        <position position="54"/>
    </location>
    <ligand>
        <name>substrate</name>
    </ligand>
</feature>
<feature type="binding site" evidence="1">
    <location>
        <position position="62"/>
    </location>
    <ligand>
        <name>substrate</name>
    </ligand>
</feature>
<feature type="binding site" evidence="1">
    <location>
        <position position="66"/>
    </location>
    <ligand>
        <name>substrate</name>
    </ligand>
</feature>
<feature type="binding site" evidence="1">
    <location>
        <begin position="94"/>
        <end position="96"/>
    </location>
    <ligand>
        <name>substrate</name>
    </ligand>
</feature>
<feature type="binding site" evidence="1">
    <location>
        <position position="100"/>
    </location>
    <ligand>
        <name>substrate</name>
    </ligand>
</feature>
<feature type="binding site" evidence="1">
    <location>
        <position position="223"/>
    </location>
    <ligand>
        <name>substrate</name>
    </ligand>
</feature>
<feature type="binding site" evidence="1">
    <location>
        <begin position="229"/>
        <end position="231"/>
    </location>
    <ligand>
        <name>substrate</name>
    </ligand>
</feature>
<feature type="binding site" evidence="1">
    <location>
        <position position="242"/>
    </location>
    <ligand>
        <name>Mg(2+)</name>
        <dbReference type="ChEBI" id="CHEBI:18420"/>
    </ligand>
</feature>